<reference key="1">
    <citation type="journal article" date="2006" name="Proc. Natl. Acad. Sci. U.S.A.">
        <title>Comparative genomics of the lactic acid bacteria.</title>
        <authorList>
            <person name="Makarova K.S."/>
            <person name="Slesarev A."/>
            <person name="Wolf Y.I."/>
            <person name="Sorokin A."/>
            <person name="Mirkin B."/>
            <person name="Koonin E.V."/>
            <person name="Pavlov A."/>
            <person name="Pavlova N."/>
            <person name="Karamychev V."/>
            <person name="Polouchine N."/>
            <person name="Shakhova V."/>
            <person name="Grigoriev I."/>
            <person name="Lou Y."/>
            <person name="Rohksar D."/>
            <person name="Lucas S."/>
            <person name="Huang K."/>
            <person name="Goodstein D.M."/>
            <person name="Hawkins T."/>
            <person name="Plengvidhya V."/>
            <person name="Welker D."/>
            <person name="Hughes J."/>
            <person name="Goh Y."/>
            <person name="Benson A."/>
            <person name="Baldwin K."/>
            <person name="Lee J.-H."/>
            <person name="Diaz-Muniz I."/>
            <person name="Dosti B."/>
            <person name="Smeianov V."/>
            <person name="Wechter W."/>
            <person name="Barabote R."/>
            <person name="Lorca G."/>
            <person name="Altermann E."/>
            <person name="Barrangou R."/>
            <person name="Ganesan B."/>
            <person name="Xie Y."/>
            <person name="Rawsthorne H."/>
            <person name="Tamir D."/>
            <person name="Parker C."/>
            <person name="Breidt F."/>
            <person name="Broadbent J.R."/>
            <person name="Hutkins R."/>
            <person name="O'Sullivan D."/>
            <person name="Steele J."/>
            <person name="Unlu G."/>
            <person name="Saier M.H. Jr."/>
            <person name="Klaenhammer T."/>
            <person name="Richardson P."/>
            <person name="Kozyavkin S."/>
            <person name="Weimer B.C."/>
            <person name="Mills D.A."/>
        </authorList>
    </citation>
    <scope>NUCLEOTIDE SEQUENCE [LARGE SCALE GENOMIC DNA]</scope>
    <source>
        <strain>ATCC BAA-365 / Lb-18</strain>
    </source>
</reference>
<feature type="chain" id="PRO_1000025283" description="Co-chaperonin GroES">
    <location>
        <begin position="1"/>
        <end position="94"/>
    </location>
</feature>
<keyword id="KW-0143">Chaperone</keyword>
<keyword id="KW-0963">Cytoplasm</keyword>
<name>CH10_LACDB</name>
<gene>
    <name evidence="1" type="primary">groES</name>
    <name evidence="1" type="synonym">groS</name>
    <name type="ordered locus">LBUL_1497</name>
</gene>
<proteinExistence type="inferred from homology"/>
<accession>Q048Y2</accession>
<sequence length="94" mass="10279">MLQPIGDRVIVEVKEVEEQTVGGIVLASNAKEKPTQGKVVAVGGGLYAEDGSKLPMTVQEGDEVLYDKYSGTKVKYEDKEYLVLHEKDILAIVK</sequence>
<comment type="function">
    <text evidence="1">Together with the chaperonin GroEL, plays an essential role in assisting protein folding. The GroEL-GroES system forms a nano-cage that allows encapsulation of the non-native substrate proteins and provides a physical environment optimized to promote and accelerate protein folding. GroES binds to the apical surface of the GroEL ring, thereby capping the opening of the GroEL channel.</text>
</comment>
<comment type="subunit">
    <text evidence="1">Heptamer of 7 subunits arranged in a ring. Interacts with the chaperonin GroEL.</text>
</comment>
<comment type="subcellular location">
    <subcellularLocation>
        <location evidence="1">Cytoplasm</location>
    </subcellularLocation>
</comment>
<comment type="similarity">
    <text evidence="1">Belongs to the GroES chaperonin family.</text>
</comment>
<evidence type="ECO:0000255" key="1">
    <source>
        <dbReference type="HAMAP-Rule" id="MF_00580"/>
    </source>
</evidence>
<protein>
    <recommendedName>
        <fullName evidence="1">Co-chaperonin GroES</fullName>
    </recommendedName>
    <alternativeName>
        <fullName evidence="1">10 kDa chaperonin</fullName>
    </alternativeName>
    <alternativeName>
        <fullName evidence="1">Chaperonin-10</fullName>
        <shortName evidence="1">Cpn10</shortName>
    </alternativeName>
</protein>
<organism>
    <name type="scientific">Lactobacillus delbrueckii subsp. bulgaricus (strain ATCC BAA-365 / Lb-18)</name>
    <dbReference type="NCBI Taxonomy" id="321956"/>
    <lineage>
        <taxon>Bacteria</taxon>
        <taxon>Bacillati</taxon>
        <taxon>Bacillota</taxon>
        <taxon>Bacilli</taxon>
        <taxon>Lactobacillales</taxon>
        <taxon>Lactobacillaceae</taxon>
        <taxon>Lactobacillus</taxon>
    </lineage>
</organism>
<dbReference type="EMBL" id="CP000412">
    <property type="protein sequence ID" value="ABJ58990.1"/>
    <property type="molecule type" value="Genomic_DNA"/>
</dbReference>
<dbReference type="RefSeq" id="WP_011544118.1">
    <property type="nucleotide sequence ID" value="NC_008529.1"/>
</dbReference>
<dbReference type="SMR" id="Q048Y2"/>
<dbReference type="KEGG" id="lbu:LBUL_1497"/>
<dbReference type="HOGENOM" id="CLU_132825_2_1_9"/>
<dbReference type="BioCyc" id="LDEL321956:LBUL_RS07075-MONOMER"/>
<dbReference type="GO" id="GO:0005737">
    <property type="term" value="C:cytoplasm"/>
    <property type="evidence" value="ECO:0007669"/>
    <property type="project" value="UniProtKB-SubCell"/>
</dbReference>
<dbReference type="GO" id="GO:0005524">
    <property type="term" value="F:ATP binding"/>
    <property type="evidence" value="ECO:0007669"/>
    <property type="project" value="InterPro"/>
</dbReference>
<dbReference type="GO" id="GO:0046872">
    <property type="term" value="F:metal ion binding"/>
    <property type="evidence" value="ECO:0007669"/>
    <property type="project" value="TreeGrafter"/>
</dbReference>
<dbReference type="GO" id="GO:0044183">
    <property type="term" value="F:protein folding chaperone"/>
    <property type="evidence" value="ECO:0007669"/>
    <property type="project" value="InterPro"/>
</dbReference>
<dbReference type="GO" id="GO:0051087">
    <property type="term" value="F:protein-folding chaperone binding"/>
    <property type="evidence" value="ECO:0007669"/>
    <property type="project" value="TreeGrafter"/>
</dbReference>
<dbReference type="GO" id="GO:0051082">
    <property type="term" value="F:unfolded protein binding"/>
    <property type="evidence" value="ECO:0007669"/>
    <property type="project" value="TreeGrafter"/>
</dbReference>
<dbReference type="GO" id="GO:0051085">
    <property type="term" value="P:chaperone cofactor-dependent protein refolding"/>
    <property type="evidence" value="ECO:0007669"/>
    <property type="project" value="TreeGrafter"/>
</dbReference>
<dbReference type="CDD" id="cd00320">
    <property type="entry name" value="cpn10"/>
    <property type="match status" value="1"/>
</dbReference>
<dbReference type="FunFam" id="2.30.33.40:FF:000001">
    <property type="entry name" value="10 kDa chaperonin"/>
    <property type="match status" value="1"/>
</dbReference>
<dbReference type="Gene3D" id="2.30.33.40">
    <property type="entry name" value="GroES chaperonin"/>
    <property type="match status" value="1"/>
</dbReference>
<dbReference type="HAMAP" id="MF_00580">
    <property type="entry name" value="CH10"/>
    <property type="match status" value="1"/>
</dbReference>
<dbReference type="InterPro" id="IPR020818">
    <property type="entry name" value="Chaperonin_GroES"/>
</dbReference>
<dbReference type="InterPro" id="IPR037124">
    <property type="entry name" value="Chaperonin_GroES_sf"/>
</dbReference>
<dbReference type="InterPro" id="IPR018369">
    <property type="entry name" value="Chaprnonin_Cpn10_CS"/>
</dbReference>
<dbReference type="InterPro" id="IPR011032">
    <property type="entry name" value="GroES-like_sf"/>
</dbReference>
<dbReference type="NCBIfam" id="NF001531">
    <property type="entry name" value="PRK00364.2-2"/>
    <property type="match status" value="1"/>
</dbReference>
<dbReference type="NCBIfam" id="NF001533">
    <property type="entry name" value="PRK00364.2-4"/>
    <property type="match status" value="1"/>
</dbReference>
<dbReference type="NCBIfam" id="NF001534">
    <property type="entry name" value="PRK00364.2-5"/>
    <property type="match status" value="1"/>
</dbReference>
<dbReference type="PANTHER" id="PTHR10772">
    <property type="entry name" value="10 KDA HEAT SHOCK PROTEIN"/>
    <property type="match status" value="1"/>
</dbReference>
<dbReference type="PANTHER" id="PTHR10772:SF58">
    <property type="entry name" value="CO-CHAPERONIN GROES"/>
    <property type="match status" value="1"/>
</dbReference>
<dbReference type="Pfam" id="PF00166">
    <property type="entry name" value="Cpn10"/>
    <property type="match status" value="1"/>
</dbReference>
<dbReference type="PRINTS" id="PR00297">
    <property type="entry name" value="CHAPERONIN10"/>
</dbReference>
<dbReference type="SMART" id="SM00883">
    <property type="entry name" value="Cpn10"/>
    <property type="match status" value="1"/>
</dbReference>
<dbReference type="SUPFAM" id="SSF50129">
    <property type="entry name" value="GroES-like"/>
    <property type="match status" value="1"/>
</dbReference>
<dbReference type="PROSITE" id="PS00681">
    <property type="entry name" value="CHAPERONINS_CPN10"/>
    <property type="match status" value="1"/>
</dbReference>